<dbReference type="EC" id="2.5.1.78" evidence="1"/>
<dbReference type="EMBL" id="AM180252">
    <property type="protein sequence ID" value="CAJ54210.1"/>
    <property type="molecule type" value="Genomic_DNA"/>
</dbReference>
<dbReference type="RefSeq" id="WP_011526237.1">
    <property type="nucleotide sequence ID" value="NC_008011.1"/>
</dbReference>
<dbReference type="SMR" id="Q1MS15"/>
<dbReference type="STRING" id="363253.LI0154"/>
<dbReference type="KEGG" id="lip:LI0154"/>
<dbReference type="eggNOG" id="COG0054">
    <property type="taxonomic scope" value="Bacteria"/>
</dbReference>
<dbReference type="HOGENOM" id="CLU_089358_1_1_7"/>
<dbReference type="OrthoDB" id="9809709at2"/>
<dbReference type="UniPathway" id="UPA00275">
    <property type="reaction ID" value="UER00404"/>
</dbReference>
<dbReference type="Proteomes" id="UP000002430">
    <property type="component" value="Chromosome"/>
</dbReference>
<dbReference type="GO" id="GO:0005829">
    <property type="term" value="C:cytosol"/>
    <property type="evidence" value="ECO:0007669"/>
    <property type="project" value="TreeGrafter"/>
</dbReference>
<dbReference type="GO" id="GO:0009349">
    <property type="term" value="C:riboflavin synthase complex"/>
    <property type="evidence" value="ECO:0007669"/>
    <property type="project" value="InterPro"/>
</dbReference>
<dbReference type="GO" id="GO:0000906">
    <property type="term" value="F:6,7-dimethyl-8-ribityllumazine synthase activity"/>
    <property type="evidence" value="ECO:0007669"/>
    <property type="project" value="UniProtKB-UniRule"/>
</dbReference>
<dbReference type="GO" id="GO:0009231">
    <property type="term" value="P:riboflavin biosynthetic process"/>
    <property type="evidence" value="ECO:0007669"/>
    <property type="project" value="UniProtKB-UniRule"/>
</dbReference>
<dbReference type="CDD" id="cd09209">
    <property type="entry name" value="Lumazine_synthase-I"/>
    <property type="match status" value="1"/>
</dbReference>
<dbReference type="FunFam" id="3.40.50.960:FF:000001">
    <property type="entry name" value="6,7-dimethyl-8-ribityllumazine synthase"/>
    <property type="match status" value="1"/>
</dbReference>
<dbReference type="Gene3D" id="3.40.50.960">
    <property type="entry name" value="Lumazine/riboflavin synthase"/>
    <property type="match status" value="1"/>
</dbReference>
<dbReference type="HAMAP" id="MF_00178">
    <property type="entry name" value="Lumazine_synth"/>
    <property type="match status" value="1"/>
</dbReference>
<dbReference type="InterPro" id="IPR034964">
    <property type="entry name" value="LS"/>
</dbReference>
<dbReference type="InterPro" id="IPR002180">
    <property type="entry name" value="LS/RS"/>
</dbReference>
<dbReference type="InterPro" id="IPR036467">
    <property type="entry name" value="LS/RS_sf"/>
</dbReference>
<dbReference type="NCBIfam" id="TIGR00114">
    <property type="entry name" value="lumazine-synth"/>
    <property type="match status" value="1"/>
</dbReference>
<dbReference type="NCBIfam" id="NF000812">
    <property type="entry name" value="PRK00061.1-4"/>
    <property type="match status" value="1"/>
</dbReference>
<dbReference type="PANTHER" id="PTHR21058:SF0">
    <property type="entry name" value="6,7-DIMETHYL-8-RIBITYLLUMAZINE SYNTHASE"/>
    <property type="match status" value="1"/>
</dbReference>
<dbReference type="PANTHER" id="PTHR21058">
    <property type="entry name" value="6,7-DIMETHYL-8-RIBITYLLUMAZINE SYNTHASE DMRL SYNTHASE LUMAZINE SYNTHASE"/>
    <property type="match status" value="1"/>
</dbReference>
<dbReference type="Pfam" id="PF00885">
    <property type="entry name" value="DMRL_synthase"/>
    <property type="match status" value="1"/>
</dbReference>
<dbReference type="SUPFAM" id="SSF52121">
    <property type="entry name" value="Lumazine synthase"/>
    <property type="match status" value="1"/>
</dbReference>
<comment type="function">
    <text evidence="1">Catalyzes the formation of 6,7-dimethyl-8-ribityllumazine by condensation of 5-amino-6-(D-ribitylamino)uracil with 3,4-dihydroxy-2-butanone 4-phosphate. This is the penultimate step in the biosynthesis of riboflavin.</text>
</comment>
<comment type="catalytic activity">
    <reaction evidence="1">
        <text>(2S)-2-hydroxy-3-oxobutyl phosphate + 5-amino-6-(D-ribitylamino)uracil = 6,7-dimethyl-8-(1-D-ribityl)lumazine + phosphate + 2 H2O + H(+)</text>
        <dbReference type="Rhea" id="RHEA:26152"/>
        <dbReference type="ChEBI" id="CHEBI:15377"/>
        <dbReference type="ChEBI" id="CHEBI:15378"/>
        <dbReference type="ChEBI" id="CHEBI:15934"/>
        <dbReference type="ChEBI" id="CHEBI:43474"/>
        <dbReference type="ChEBI" id="CHEBI:58201"/>
        <dbReference type="ChEBI" id="CHEBI:58830"/>
        <dbReference type="EC" id="2.5.1.78"/>
    </reaction>
</comment>
<comment type="pathway">
    <text evidence="1">Cofactor biosynthesis; riboflavin biosynthesis; riboflavin from 2-hydroxy-3-oxobutyl phosphate and 5-amino-6-(D-ribitylamino)uracil: step 1/2.</text>
</comment>
<comment type="similarity">
    <text evidence="1">Belongs to the DMRL synthase family.</text>
</comment>
<protein>
    <recommendedName>
        <fullName evidence="1">6,7-dimethyl-8-ribityllumazine synthase</fullName>
        <shortName evidence="1">DMRL synthase</shortName>
        <shortName evidence="1">LS</shortName>
        <shortName evidence="1">Lumazine synthase</shortName>
        <ecNumber evidence="1">2.5.1.78</ecNumber>
    </recommendedName>
</protein>
<keyword id="KW-1185">Reference proteome</keyword>
<keyword id="KW-0686">Riboflavin biosynthesis</keyword>
<keyword id="KW-0808">Transferase</keyword>
<reference key="1">
    <citation type="submission" date="2005-11" db="EMBL/GenBank/DDBJ databases">
        <title>The complete genome sequence of Lawsonia intracellularis: the causative agent of proliferative enteropathy.</title>
        <authorList>
            <person name="Kaur K."/>
            <person name="Zhang Q."/>
            <person name="Beckler D."/>
            <person name="Munir S."/>
            <person name="Li L."/>
            <person name="Kinsley K."/>
            <person name="Herron L."/>
            <person name="Peterson A."/>
            <person name="May B."/>
            <person name="Singh S."/>
            <person name="Gebhart C."/>
            <person name="Kapur V."/>
        </authorList>
    </citation>
    <scope>NUCLEOTIDE SEQUENCE [LARGE SCALE GENOMIC DNA]</scope>
    <source>
        <strain>PHE/MN1-00</strain>
    </source>
</reference>
<sequence length="157" mass="16685">MGQLNVIEGHYDASGLRFAILASRFNDFVVDRLISGSIDCILRHGGTKENITIVRVAGAMELPLVCKKLSLTSKFDGIIILGAIIRGSTPHFDYVASEATKGVVNVSLQTDVPIGFGVLTTDTIEQAIERAGSKAGNKGSDATLAVLESIRVIQKIS</sequence>
<name>RISB_LAWIP</name>
<evidence type="ECO:0000255" key="1">
    <source>
        <dbReference type="HAMAP-Rule" id="MF_00178"/>
    </source>
</evidence>
<feature type="chain" id="PRO_1000040439" description="6,7-dimethyl-8-ribityllumazine synthase">
    <location>
        <begin position="1"/>
        <end position="157"/>
    </location>
</feature>
<feature type="active site" description="Proton donor" evidence="1">
    <location>
        <position position="91"/>
    </location>
</feature>
<feature type="binding site" evidence="1">
    <location>
        <position position="25"/>
    </location>
    <ligand>
        <name>5-amino-6-(D-ribitylamino)uracil</name>
        <dbReference type="ChEBI" id="CHEBI:15934"/>
    </ligand>
</feature>
<feature type="binding site" evidence="1">
    <location>
        <begin position="59"/>
        <end position="61"/>
    </location>
    <ligand>
        <name>5-amino-6-(D-ribitylamino)uracil</name>
        <dbReference type="ChEBI" id="CHEBI:15934"/>
    </ligand>
</feature>
<feature type="binding site" evidence="1">
    <location>
        <begin position="83"/>
        <end position="85"/>
    </location>
    <ligand>
        <name>5-amino-6-(D-ribitylamino)uracil</name>
        <dbReference type="ChEBI" id="CHEBI:15934"/>
    </ligand>
</feature>
<feature type="binding site" evidence="1">
    <location>
        <begin position="88"/>
        <end position="89"/>
    </location>
    <ligand>
        <name>(2S)-2-hydroxy-3-oxobutyl phosphate</name>
        <dbReference type="ChEBI" id="CHEBI:58830"/>
    </ligand>
</feature>
<feature type="binding site" evidence="1">
    <location>
        <position position="116"/>
    </location>
    <ligand>
        <name>5-amino-6-(D-ribitylamino)uracil</name>
        <dbReference type="ChEBI" id="CHEBI:15934"/>
    </ligand>
</feature>
<feature type="binding site" evidence="1">
    <location>
        <position position="130"/>
    </location>
    <ligand>
        <name>(2S)-2-hydroxy-3-oxobutyl phosphate</name>
        <dbReference type="ChEBI" id="CHEBI:58830"/>
    </ligand>
</feature>
<organism>
    <name type="scientific">Lawsonia intracellularis (strain PHE/MN1-00)</name>
    <dbReference type="NCBI Taxonomy" id="363253"/>
    <lineage>
        <taxon>Bacteria</taxon>
        <taxon>Pseudomonadati</taxon>
        <taxon>Thermodesulfobacteriota</taxon>
        <taxon>Desulfovibrionia</taxon>
        <taxon>Desulfovibrionales</taxon>
        <taxon>Desulfovibrionaceae</taxon>
        <taxon>Lawsonia</taxon>
    </lineage>
</organism>
<gene>
    <name evidence="1" type="primary">ribH</name>
    <name type="ordered locus">LI0154</name>
</gene>
<accession>Q1MS15</accession>
<proteinExistence type="inferred from homology"/>